<evidence type="ECO:0000250" key="1"/>
<evidence type="ECO:0000255" key="2">
    <source>
        <dbReference type="PROSITE-ProRule" id="PRU01082"/>
    </source>
</evidence>
<evidence type="ECO:0000305" key="3"/>
<comment type="catalytic activity">
    <reaction>
        <text>O-phospho-L-seryl-[protein] + H2O = L-seryl-[protein] + phosphate</text>
        <dbReference type="Rhea" id="RHEA:20629"/>
        <dbReference type="Rhea" id="RHEA-COMP:9863"/>
        <dbReference type="Rhea" id="RHEA-COMP:11604"/>
        <dbReference type="ChEBI" id="CHEBI:15377"/>
        <dbReference type="ChEBI" id="CHEBI:29999"/>
        <dbReference type="ChEBI" id="CHEBI:43474"/>
        <dbReference type="ChEBI" id="CHEBI:83421"/>
        <dbReference type="EC" id="3.1.3.16"/>
    </reaction>
</comment>
<comment type="catalytic activity">
    <reaction>
        <text>O-phospho-L-threonyl-[protein] + H2O = L-threonyl-[protein] + phosphate</text>
        <dbReference type="Rhea" id="RHEA:47004"/>
        <dbReference type="Rhea" id="RHEA-COMP:11060"/>
        <dbReference type="Rhea" id="RHEA-COMP:11605"/>
        <dbReference type="ChEBI" id="CHEBI:15377"/>
        <dbReference type="ChEBI" id="CHEBI:30013"/>
        <dbReference type="ChEBI" id="CHEBI:43474"/>
        <dbReference type="ChEBI" id="CHEBI:61977"/>
        <dbReference type="EC" id="3.1.3.16"/>
    </reaction>
</comment>
<comment type="cofactor">
    <cofactor evidence="1">
        <name>Mg(2+)</name>
        <dbReference type="ChEBI" id="CHEBI:18420"/>
    </cofactor>
    <cofactor evidence="1">
        <name>Mn(2+)</name>
        <dbReference type="ChEBI" id="CHEBI:29035"/>
    </cofactor>
    <text evidence="1">Binds 1 Mg(2+) or Mn(2+) ion per subunit.</text>
</comment>
<comment type="subcellular location">
    <subcellularLocation>
        <location evidence="1">Mitochondrion matrix</location>
    </subcellularLocation>
</comment>
<comment type="similarity">
    <text evidence="3">Belongs to the PP2C family.</text>
</comment>
<organism>
    <name type="scientific">Xenopus laevis</name>
    <name type="common">African clawed frog</name>
    <dbReference type="NCBI Taxonomy" id="8355"/>
    <lineage>
        <taxon>Eukaryota</taxon>
        <taxon>Metazoa</taxon>
        <taxon>Chordata</taxon>
        <taxon>Craniata</taxon>
        <taxon>Vertebrata</taxon>
        <taxon>Euteleostomi</taxon>
        <taxon>Amphibia</taxon>
        <taxon>Batrachia</taxon>
        <taxon>Anura</taxon>
        <taxon>Pipoidea</taxon>
        <taxon>Pipidae</taxon>
        <taxon>Xenopodinae</taxon>
        <taxon>Xenopus</taxon>
        <taxon>Xenopus</taxon>
    </lineage>
</organism>
<dbReference type="EC" id="3.1.3.16"/>
<dbReference type="EMBL" id="BC072312">
    <property type="protein sequence ID" value="AAH72312.1"/>
    <property type="molecule type" value="mRNA"/>
</dbReference>
<dbReference type="RefSeq" id="NP_001085111.1">
    <property type="nucleotide sequence ID" value="NM_001091642.1"/>
</dbReference>
<dbReference type="RefSeq" id="XP_018091803.1">
    <property type="nucleotide sequence ID" value="XM_018236314.1"/>
</dbReference>
<dbReference type="RefSeq" id="XP_018091812.1">
    <property type="nucleotide sequence ID" value="XM_018236323.1"/>
</dbReference>
<dbReference type="SMR" id="Q6ING9"/>
<dbReference type="DNASU" id="432182"/>
<dbReference type="GeneID" id="432182"/>
<dbReference type="KEGG" id="xla:432182"/>
<dbReference type="AGR" id="Xenbase:XB-GENE-956548"/>
<dbReference type="CTD" id="432182"/>
<dbReference type="Xenbase" id="XB-GENE-956548">
    <property type="gene designation" value="ppm1k.S"/>
</dbReference>
<dbReference type="OMA" id="AAEFCHK"/>
<dbReference type="OrthoDB" id="416093at2759"/>
<dbReference type="Proteomes" id="UP000186698">
    <property type="component" value="Chromosome 1S"/>
</dbReference>
<dbReference type="Bgee" id="432182">
    <property type="expression patterns" value="Expressed in heart and 19 other cell types or tissues"/>
</dbReference>
<dbReference type="GO" id="GO:0005759">
    <property type="term" value="C:mitochondrial matrix"/>
    <property type="evidence" value="ECO:0007669"/>
    <property type="project" value="UniProtKB-SubCell"/>
</dbReference>
<dbReference type="GO" id="GO:0005739">
    <property type="term" value="C:mitochondrion"/>
    <property type="evidence" value="ECO:0000318"/>
    <property type="project" value="GO_Central"/>
</dbReference>
<dbReference type="GO" id="GO:0046872">
    <property type="term" value="F:metal ion binding"/>
    <property type="evidence" value="ECO:0007669"/>
    <property type="project" value="UniProtKB-KW"/>
</dbReference>
<dbReference type="GO" id="GO:0004722">
    <property type="term" value="F:protein serine/threonine phosphatase activity"/>
    <property type="evidence" value="ECO:0000318"/>
    <property type="project" value="GO_Central"/>
</dbReference>
<dbReference type="GO" id="GO:1902531">
    <property type="term" value="P:regulation of intracellular signal transduction"/>
    <property type="evidence" value="ECO:0000318"/>
    <property type="project" value="GO_Central"/>
</dbReference>
<dbReference type="CDD" id="cd00143">
    <property type="entry name" value="PP2Cc"/>
    <property type="match status" value="1"/>
</dbReference>
<dbReference type="FunFam" id="3.60.40.10:FF:000033">
    <property type="entry name" value="Protein phosphatase 1K, mitochondrial"/>
    <property type="match status" value="1"/>
</dbReference>
<dbReference type="Gene3D" id="3.60.40.10">
    <property type="entry name" value="PPM-type phosphatase domain"/>
    <property type="match status" value="1"/>
</dbReference>
<dbReference type="InterPro" id="IPR015655">
    <property type="entry name" value="PP2C"/>
</dbReference>
<dbReference type="InterPro" id="IPR000222">
    <property type="entry name" value="PP2C_BS"/>
</dbReference>
<dbReference type="InterPro" id="IPR036457">
    <property type="entry name" value="PPM-type-like_dom_sf"/>
</dbReference>
<dbReference type="InterPro" id="IPR001932">
    <property type="entry name" value="PPM-type_phosphatase-like_dom"/>
</dbReference>
<dbReference type="PANTHER" id="PTHR47992">
    <property type="entry name" value="PROTEIN PHOSPHATASE"/>
    <property type="match status" value="1"/>
</dbReference>
<dbReference type="Pfam" id="PF00481">
    <property type="entry name" value="PP2C"/>
    <property type="match status" value="1"/>
</dbReference>
<dbReference type="SMART" id="SM00331">
    <property type="entry name" value="PP2C_SIG"/>
    <property type="match status" value="1"/>
</dbReference>
<dbReference type="SMART" id="SM00332">
    <property type="entry name" value="PP2Cc"/>
    <property type="match status" value="1"/>
</dbReference>
<dbReference type="SUPFAM" id="SSF81606">
    <property type="entry name" value="PP2C-like"/>
    <property type="match status" value="1"/>
</dbReference>
<dbReference type="PROSITE" id="PS01032">
    <property type="entry name" value="PPM_1"/>
    <property type="match status" value="1"/>
</dbReference>
<dbReference type="PROSITE" id="PS51746">
    <property type="entry name" value="PPM_2"/>
    <property type="match status" value="1"/>
</dbReference>
<keyword id="KW-0378">Hydrolase</keyword>
<keyword id="KW-0460">Magnesium</keyword>
<keyword id="KW-0464">Manganese</keyword>
<keyword id="KW-0479">Metal-binding</keyword>
<keyword id="KW-0496">Mitochondrion</keyword>
<keyword id="KW-0904">Protein phosphatase</keyword>
<keyword id="KW-1185">Reference proteome</keyword>
<keyword id="KW-0809">Transit peptide</keyword>
<accession>Q6ING9</accession>
<sequence length="373" mass="41536">MSTAILVSLLRNGRCQVNRGALTLCFQKEHSCTTSTRHCFSANRRCFSSRFDLDGSGRPATWDSFGIWDNRIDEPIQLPPSIKYGKLIPHINLSKVGCSTQLGKRKENEDRFKLARLTPDILYFAVYDGHGGASAAEFCDRFMEDYIKEFLVEEHDMEKVLVKAFLEINKAFARHAHLSVDASLLTCGTTATVALLRDGIELVVASVGDSRALLCRRGKPFKLTIDHTPERKEEKLRIKKSGGFVTWNSLGQPNVNGRLAMTRSIGDLDLKSMGVIAEPETKRVKLQHTDDGFLVLTTDGINFIVNSQEICDIINQCHDPKEAAQVLTEQAIQYGTEDNSTAIVVPFGAWGKHKSSEVSFSFSRGFASSGRWD</sequence>
<reference key="1">
    <citation type="submission" date="2004-06" db="EMBL/GenBank/DDBJ databases">
        <authorList>
            <consortium name="NIH - Xenopus Gene Collection (XGC) project"/>
        </authorList>
    </citation>
    <scope>NUCLEOTIDE SEQUENCE [LARGE SCALE MRNA]</scope>
    <source>
        <tissue>Ovary</tissue>
    </source>
</reference>
<name>PPM1K_XENLA</name>
<protein>
    <recommendedName>
        <fullName>Protein phosphatase 1K, mitochondrial</fullName>
        <ecNumber>3.1.3.16</ecNumber>
    </recommendedName>
    <alternativeName>
        <fullName>Protein phosphatase 2C isoform kappa</fullName>
        <shortName>PP2C-kappa</shortName>
    </alternativeName>
</protein>
<gene>
    <name type="primary">ppm1k</name>
</gene>
<feature type="transit peptide" description="Mitochondrion" evidence="1">
    <location>
        <begin position="1"/>
        <end status="unknown"/>
    </location>
</feature>
<feature type="chain" id="PRO_0000278211" description="Protein phosphatase 1K, mitochondrial">
    <location>
        <begin status="unknown"/>
        <end position="373"/>
    </location>
</feature>
<feature type="domain" description="PPM-type phosphatase" evidence="2">
    <location>
        <begin position="95"/>
        <end position="347"/>
    </location>
</feature>
<feature type="binding site" evidence="1">
    <location>
        <position position="128"/>
    </location>
    <ligand>
        <name>Mg(2+)</name>
        <dbReference type="ChEBI" id="CHEBI:18420"/>
    </ligand>
</feature>
<feature type="binding site" evidence="1">
    <location>
        <position position="129"/>
    </location>
    <ligand>
        <name>Mg(2+)</name>
        <dbReference type="ChEBI" id="CHEBI:18420"/>
    </ligand>
</feature>
<feature type="binding site" evidence="1">
    <location>
        <position position="338"/>
    </location>
    <ligand>
        <name>Mg(2+)</name>
        <dbReference type="ChEBI" id="CHEBI:18420"/>
    </ligand>
</feature>
<proteinExistence type="evidence at transcript level"/>